<proteinExistence type="inferred from homology"/>
<feature type="chain" id="PRO_0000354541" description="Large ribosomal subunit protein uL22">
    <location>
        <begin position="1"/>
        <end position="153"/>
    </location>
</feature>
<gene>
    <name evidence="1" type="primary">rpl22</name>
    <name type="ordered locus">MmarC5_0175</name>
</gene>
<evidence type="ECO:0000255" key="1">
    <source>
        <dbReference type="HAMAP-Rule" id="MF_01331"/>
    </source>
</evidence>
<evidence type="ECO:0000305" key="2"/>
<protein>
    <recommendedName>
        <fullName evidence="1">Large ribosomal subunit protein uL22</fullName>
    </recommendedName>
    <alternativeName>
        <fullName evidence="2">50S ribosomal protein L22</fullName>
    </alternativeName>
</protein>
<reference key="1">
    <citation type="submission" date="2007-03" db="EMBL/GenBank/DDBJ databases">
        <title>Complete sequence of chromosome of Methanococcus maripaludis C5.</title>
        <authorList>
            <consortium name="US DOE Joint Genome Institute"/>
            <person name="Copeland A."/>
            <person name="Lucas S."/>
            <person name="Lapidus A."/>
            <person name="Barry K."/>
            <person name="Glavina del Rio T."/>
            <person name="Dalin E."/>
            <person name="Tice H."/>
            <person name="Pitluck S."/>
            <person name="Chertkov O."/>
            <person name="Brettin T."/>
            <person name="Bruce D."/>
            <person name="Han C."/>
            <person name="Detter J.C."/>
            <person name="Schmutz J."/>
            <person name="Larimer F."/>
            <person name="Land M."/>
            <person name="Hauser L."/>
            <person name="Kyrpides N."/>
            <person name="Mikhailova N."/>
            <person name="Sieprawska-Lupa M."/>
            <person name="Whitman W.B."/>
            <person name="Richardson P."/>
        </authorList>
    </citation>
    <scope>NUCLEOTIDE SEQUENCE [LARGE SCALE GENOMIC DNA]</scope>
    <source>
        <strain>C5 / ATCC BAA-1333</strain>
    </source>
</reference>
<sequence>MAKLKYKVEADPKNTARAMGRTLRISRKHAIELCRELSGMKLDAAVAYLNRVIALETPVPFKVHNKDLPHRKGKIGTHSGRFPQKASLEILQVLDNAKKNAEQKGLNTEKLRIKHISSNRGFTIKRYMPRAFGRASPKNQETIHIQVILEEFY</sequence>
<comment type="function">
    <text evidence="1">This protein binds specifically to 23S rRNA. It makes multiple contacts with different domains of the 23S rRNA in the assembled 50S subunit and ribosome.</text>
</comment>
<comment type="function">
    <text evidence="1">The globular domain of the protein is located near the polypeptide exit tunnel on the outside of the subunit, while an extended beta-hairpin is found that lines the wall of the exit tunnel in the center of the 70S ribosome.</text>
</comment>
<comment type="subunit">
    <text evidence="1">Part of the 50S ribosomal subunit.</text>
</comment>
<comment type="similarity">
    <text evidence="1">Belongs to the universal ribosomal protein uL22 family.</text>
</comment>
<dbReference type="EMBL" id="CP000609">
    <property type="protein sequence ID" value="ABO34492.1"/>
    <property type="molecule type" value="Genomic_DNA"/>
</dbReference>
<dbReference type="RefSeq" id="WP_011867950.1">
    <property type="nucleotide sequence ID" value="NC_009135.1"/>
</dbReference>
<dbReference type="SMR" id="A4FWB7"/>
<dbReference type="STRING" id="402880.MmarC5_0175"/>
<dbReference type="GeneID" id="4929244"/>
<dbReference type="KEGG" id="mmq:MmarC5_0175"/>
<dbReference type="eggNOG" id="arCOG04098">
    <property type="taxonomic scope" value="Archaea"/>
</dbReference>
<dbReference type="HOGENOM" id="CLU_083987_0_2_2"/>
<dbReference type="OrthoDB" id="314984at2157"/>
<dbReference type="Proteomes" id="UP000000253">
    <property type="component" value="Chromosome"/>
</dbReference>
<dbReference type="GO" id="GO:0022625">
    <property type="term" value="C:cytosolic large ribosomal subunit"/>
    <property type="evidence" value="ECO:0007669"/>
    <property type="project" value="TreeGrafter"/>
</dbReference>
<dbReference type="GO" id="GO:0019843">
    <property type="term" value="F:rRNA binding"/>
    <property type="evidence" value="ECO:0007669"/>
    <property type="project" value="UniProtKB-UniRule"/>
</dbReference>
<dbReference type="GO" id="GO:0003735">
    <property type="term" value="F:structural constituent of ribosome"/>
    <property type="evidence" value="ECO:0007669"/>
    <property type="project" value="InterPro"/>
</dbReference>
<dbReference type="GO" id="GO:0002181">
    <property type="term" value="P:cytoplasmic translation"/>
    <property type="evidence" value="ECO:0007669"/>
    <property type="project" value="TreeGrafter"/>
</dbReference>
<dbReference type="CDD" id="cd00336">
    <property type="entry name" value="Ribosomal_L22"/>
    <property type="match status" value="1"/>
</dbReference>
<dbReference type="Gene3D" id="3.90.470.10">
    <property type="entry name" value="Ribosomal protein L22/L17"/>
    <property type="match status" value="1"/>
</dbReference>
<dbReference type="HAMAP" id="MF_01331_A">
    <property type="entry name" value="Ribosomal_uL22_A"/>
    <property type="match status" value="1"/>
</dbReference>
<dbReference type="InterPro" id="IPR001063">
    <property type="entry name" value="Ribosomal_uL22"/>
</dbReference>
<dbReference type="InterPro" id="IPR018260">
    <property type="entry name" value="Ribosomal_uL22_CS"/>
</dbReference>
<dbReference type="InterPro" id="IPR005721">
    <property type="entry name" value="Ribosomal_uL22_euk/arc"/>
</dbReference>
<dbReference type="InterPro" id="IPR036394">
    <property type="entry name" value="Ribosomal_uL22_sf"/>
</dbReference>
<dbReference type="NCBIfam" id="NF003260">
    <property type="entry name" value="PRK04223.1"/>
    <property type="match status" value="1"/>
</dbReference>
<dbReference type="NCBIfam" id="TIGR01038">
    <property type="entry name" value="uL22_arch_euk"/>
    <property type="match status" value="1"/>
</dbReference>
<dbReference type="PANTHER" id="PTHR11593">
    <property type="entry name" value="60S RIBOSOMAL PROTEIN L17"/>
    <property type="match status" value="1"/>
</dbReference>
<dbReference type="PANTHER" id="PTHR11593:SF10">
    <property type="entry name" value="60S RIBOSOMAL PROTEIN L17"/>
    <property type="match status" value="1"/>
</dbReference>
<dbReference type="Pfam" id="PF00237">
    <property type="entry name" value="Ribosomal_L22"/>
    <property type="match status" value="1"/>
</dbReference>
<dbReference type="SUPFAM" id="SSF54843">
    <property type="entry name" value="Ribosomal protein L22"/>
    <property type="match status" value="1"/>
</dbReference>
<dbReference type="PROSITE" id="PS00464">
    <property type="entry name" value="RIBOSOMAL_L22"/>
    <property type="match status" value="1"/>
</dbReference>
<organism>
    <name type="scientific">Methanococcus maripaludis (strain C5 / ATCC BAA-1333)</name>
    <dbReference type="NCBI Taxonomy" id="402880"/>
    <lineage>
        <taxon>Archaea</taxon>
        <taxon>Methanobacteriati</taxon>
        <taxon>Methanobacteriota</taxon>
        <taxon>Methanomada group</taxon>
        <taxon>Methanococci</taxon>
        <taxon>Methanococcales</taxon>
        <taxon>Methanococcaceae</taxon>
        <taxon>Methanococcus</taxon>
    </lineage>
</organism>
<name>RL22_METM5</name>
<keyword id="KW-0687">Ribonucleoprotein</keyword>
<keyword id="KW-0689">Ribosomal protein</keyword>
<keyword id="KW-0694">RNA-binding</keyword>
<keyword id="KW-0699">rRNA-binding</keyword>
<accession>A4FWB7</accession>